<evidence type="ECO:0000255" key="1">
    <source>
        <dbReference type="HAMAP-Rule" id="MF_00033"/>
    </source>
</evidence>
<accession>Q03QH5</accession>
<organism>
    <name type="scientific">Levilactobacillus brevis (strain ATCC 367 / BCRC 12310 / CIP 105137 / JCM 1170 / LMG 11437 / NCIMB 947 / NCTC 947)</name>
    <name type="common">Lactobacillus brevis</name>
    <dbReference type="NCBI Taxonomy" id="387344"/>
    <lineage>
        <taxon>Bacteria</taxon>
        <taxon>Bacillati</taxon>
        <taxon>Bacillota</taxon>
        <taxon>Bacilli</taxon>
        <taxon>Lactobacillales</taxon>
        <taxon>Lactobacillaceae</taxon>
        <taxon>Levilactobacillus</taxon>
    </lineage>
</organism>
<proteinExistence type="inferred from homology"/>
<protein>
    <recommendedName>
        <fullName evidence="1">UDP-N-acetylglucosamine--N-acetylmuramyl-(pentapeptide) pyrophosphoryl-undecaprenol N-acetylglucosamine transferase</fullName>
        <ecNumber evidence="1">2.4.1.227</ecNumber>
    </recommendedName>
    <alternativeName>
        <fullName evidence="1">Undecaprenyl-PP-MurNAc-pentapeptide-UDPGlcNAc GlcNAc transferase</fullName>
    </alternativeName>
</protein>
<dbReference type="EC" id="2.4.1.227" evidence="1"/>
<dbReference type="EMBL" id="CP000416">
    <property type="protein sequence ID" value="ABJ64547.1"/>
    <property type="molecule type" value="Genomic_DNA"/>
</dbReference>
<dbReference type="RefSeq" id="WP_011668175.1">
    <property type="nucleotide sequence ID" value="NC_008497.1"/>
</dbReference>
<dbReference type="SMR" id="Q03QH5"/>
<dbReference type="STRING" id="387344.LVIS_1449"/>
<dbReference type="CAZy" id="GT28">
    <property type="family name" value="Glycosyltransferase Family 28"/>
</dbReference>
<dbReference type="KEGG" id="lbr:LVIS_1449"/>
<dbReference type="eggNOG" id="COG0707">
    <property type="taxonomic scope" value="Bacteria"/>
</dbReference>
<dbReference type="HOGENOM" id="CLU_037404_0_1_9"/>
<dbReference type="UniPathway" id="UPA00219"/>
<dbReference type="Proteomes" id="UP000001652">
    <property type="component" value="Chromosome"/>
</dbReference>
<dbReference type="GO" id="GO:0005886">
    <property type="term" value="C:plasma membrane"/>
    <property type="evidence" value="ECO:0007669"/>
    <property type="project" value="UniProtKB-SubCell"/>
</dbReference>
<dbReference type="GO" id="GO:0050511">
    <property type="term" value="F:undecaprenyldiphospho-muramoylpentapeptide beta-N-acetylglucosaminyltransferase activity"/>
    <property type="evidence" value="ECO:0007669"/>
    <property type="project" value="UniProtKB-UniRule"/>
</dbReference>
<dbReference type="GO" id="GO:0005975">
    <property type="term" value="P:carbohydrate metabolic process"/>
    <property type="evidence" value="ECO:0007669"/>
    <property type="project" value="InterPro"/>
</dbReference>
<dbReference type="GO" id="GO:0051301">
    <property type="term" value="P:cell division"/>
    <property type="evidence" value="ECO:0007669"/>
    <property type="project" value="UniProtKB-KW"/>
</dbReference>
<dbReference type="GO" id="GO:0071555">
    <property type="term" value="P:cell wall organization"/>
    <property type="evidence" value="ECO:0007669"/>
    <property type="project" value="UniProtKB-KW"/>
</dbReference>
<dbReference type="GO" id="GO:0030259">
    <property type="term" value="P:lipid glycosylation"/>
    <property type="evidence" value="ECO:0007669"/>
    <property type="project" value="UniProtKB-UniRule"/>
</dbReference>
<dbReference type="GO" id="GO:0009252">
    <property type="term" value="P:peptidoglycan biosynthetic process"/>
    <property type="evidence" value="ECO:0007669"/>
    <property type="project" value="UniProtKB-UniRule"/>
</dbReference>
<dbReference type="GO" id="GO:0008360">
    <property type="term" value="P:regulation of cell shape"/>
    <property type="evidence" value="ECO:0007669"/>
    <property type="project" value="UniProtKB-KW"/>
</dbReference>
<dbReference type="CDD" id="cd03785">
    <property type="entry name" value="GT28_MurG"/>
    <property type="match status" value="1"/>
</dbReference>
<dbReference type="Gene3D" id="3.40.50.2000">
    <property type="entry name" value="Glycogen Phosphorylase B"/>
    <property type="match status" value="2"/>
</dbReference>
<dbReference type="HAMAP" id="MF_00033">
    <property type="entry name" value="MurG"/>
    <property type="match status" value="1"/>
</dbReference>
<dbReference type="InterPro" id="IPR006009">
    <property type="entry name" value="GlcNAc_MurG"/>
</dbReference>
<dbReference type="InterPro" id="IPR007235">
    <property type="entry name" value="Glyco_trans_28_C"/>
</dbReference>
<dbReference type="InterPro" id="IPR004276">
    <property type="entry name" value="GlycoTrans_28_N"/>
</dbReference>
<dbReference type="NCBIfam" id="TIGR01133">
    <property type="entry name" value="murG"/>
    <property type="match status" value="1"/>
</dbReference>
<dbReference type="PANTHER" id="PTHR21015:SF22">
    <property type="entry name" value="GLYCOSYLTRANSFERASE"/>
    <property type="match status" value="1"/>
</dbReference>
<dbReference type="PANTHER" id="PTHR21015">
    <property type="entry name" value="UDP-N-ACETYLGLUCOSAMINE--N-ACETYLMURAMYL-(PENTAPEPTIDE) PYROPHOSPHORYL-UNDECAPRENOL N-ACETYLGLUCOSAMINE TRANSFERASE 1"/>
    <property type="match status" value="1"/>
</dbReference>
<dbReference type="Pfam" id="PF04101">
    <property type="entry name" value="Glyco_tran_28_C"/>
    <property type="match status" value="1"/>
</dbReference>
<dbReference type="Pfam" id="PF03033">
    <property type="entry name" value="Glyco_transf_28"/>
    <property type="match status" value="1"/>
</dbReference>
<dbReference type="SUPFAM" id="SSF53756">
    <property type="entry name" value="UDP-Glycosyltransferase/glycogen phosphorylase"/>
    <property type="match status" value="1"/>
</dbReference>
<feature type="chain" id="PRO_1000002658" description="UDP-N-acetylglucosamine--N-acetylmuramyl-(pentapeptide) pyrophosphoryl-undecaprenol N-acetylglucosamine transferase">
    <location>
        <begin position="1"/>
        <end position="364"/>
    </location>
</feature>
<feature type="binding site" evidence="1">
    <location>
        <begin position="10"/>
        <end position="12"/>
    </location>
    <ligand>
        <name>UDP-N-acetyl-alpha-D-glucosamine</name>
        <dbReference type="ChEBI" id="CHEBI:57705"/>
    </ligand>
</feature>
<feature type="binding site" evidence="1">
    <location>
        <position position="124"/>
    </location>
    <ligand>
        <name>UDP-N-acetyl-alpha-D-glucosamine</name>
        <dbReference type="ChEBI" id="CHEBI:57705"/>
    </ligand>
</feature>
<feature type="binding site" evidence="1">
    <location>
        <position position="195"/>
    </location>
    <ligand>
        <name>UDP-N-acetyl-alpha-D-glucosamine</name>
        <dbReference type="ChEBI" id="CHEBI:57705"/>
    </ligand>
</feature>
<feature type="binding site" evidence="1">
    <location>
        <position position="250"/>
    </location>
    <ligand>
        <name>UDP-N-acetyl-alpha-D-glucosamine</name>
        <dbReference type="ChEBI" id="CHEBI:57705"/>
    </ligand>
</feature>
<feature type="binding site" evidence="1">
    <location>
        <position position="295"/>
    </location>
    <ligand>
        <name>UDP-N-acetyl-alpha-D-glucosamine</name>
        <dbReference type="ChEBI" id="CHEBI:57705"/>
    </ligand>
</feature>
<comment type="function">
    <text evidence="1">Cell wall formation. Catalyzes the transfer of a GlcNAc subunit on undecaprenyl-pyrophosphoryl-MurNAc-pentapeptide (lipid intermediate I) to form undecaprenyl-pyrophosphoryl-MurNAc-(pentapeptide)GlcNAc (lipid intermediate II).</text>
</comment>
<comment type="catalytic activity">
    <reaction evidence="1">
        <text>Mur2Ac(oyl-L-Ala-gamma-D-Glu-L-Lys-D-Ala-D-Ala)-di-trans,octa-cis-undecaprenyl diphosphate + UDP-N-acetyl-alpha-D-glucosamine = beta-D-GlcNAc-(1-&gt;4)-Mur2Ac(oyl-L-Ala-gamma-D-Glu-L-Lys-D-Ala-D-Ala)-di-trans,octa-cis-undecaprenyl diphosphate + UDP + H(+)</text>
        <dbReference type="Rhea" id="RHEA:23192"/>
        <dbReference type="ChEBI" id="CHEBI:15378"/>
        <dbReference type="ChEBI" id="CHEBI:57705"/>
        <dbReference type="ChEBI" id="CHEBI:58223"/>
        <dbReference type="ChEBI" id="CHEBI:60032"/>
        <dbReference type="ChEBI" id="CHEBI:60033"/>
        <dbReference type="EC" id="2.4.1.227"/>
    </reaction>
</comment>
<comment type="pathway">
    <text evidence="1">Cell wall biogenesis; peptidoglycan biosynthesis.</text>
</comment>
<comment type="subcellular location">
    <subcellularLocation>
        <location evidence="1">Cell membrane</location>
        <topology evidence="1">Peripheral membrane protein</topology>
        <orientation evidence="1">Cytoplasmic side</orientation>
    </subcellularLocation>
</comment>
<comment type="similarity">
    <text evidence="1">Belongs to the glycosyltransferase 28 family. MurG subfamily.</text>
</comment>
<keyword id="KW-0131">Cell cycle</keyword>
<keyword id="KW-0132">Cell division</keyword>
<keyword id="KW-1003">Cell membrane</keyword>
<keyword id="KW-0133">Cell shape</keyword>
<keyword id="KW-0961">Cell wall biogenesis/degradation</keyword>
<keyword id="KW-0328">Glycosyltransferase</keyword>
<keyword id="KW-0472">Membrane</keyword>
<keyword id="KW-0573">Peptidoglycan synthesis</keyword>
<keyword id="KW-1185">Reference proteome</keyword>
<keyword id="KW-0808">Transferase</keyword>
<reference key="1">
    <citation type="journal article" date="2006" name="Proc. Natl. Acad. Sci. U.S.A.">
        <title>Comparative genomics of the lactic acid bacteria.</title>
        <authorList>
            <person name="Makarova K.S."/>
            <person name="Slesarev A."/>
            <person name="Wolf Y.I."/>
            <person name="Sorokin A."/>
            <person name="Mirkin B."/>
            <person name="Koonin E.V."/>
            <person name="Pavlov A."/>
            <person name="Pavlova N."/>
            <person name="Karamychev V."/>
            <person name="Polouchine N."/>
            <person name="Shakhova V."/>
            <person name="Grigoriev I."/>
            <person name="Lou Y."/>
            <person name="Rohksar D."/>
            <person name="Lucas S."/>
            <person name="Huang K."/>
            <person name="Goodstein D.M."/>
            <person name="Hawkins T."/>
            <person name="Plengvidhya V."/>
            <person name="Welker D."/>
            <person name="Hughes J."/>
            <person name="Goh Y."/>
            <person name="Benson A."/>
            <person name="Baldwin K."/>
            <person name="Lee J.-H."/>
            <person name="Diaz-Muniz I."/>
            <person name="Dosti B."/>
            <person name="Smeianov V."/>
            <person name="Wechter W."/>
            <person name="Barabote R."/>
            <person name="Lorca G."/>
            <person name="Altermann E."/>
            <person name="Barrangou R."/>
            <person name="Ganesan B."/>
            <person name="Xie Y."/>
            <person name="Rawsthorne H."/>
            <person name="Tamir D."/>
            <person name="Parker C."/>
            <person name="Breidt F."/>
            <person name="Broadbent J.R."/>
            <person name="Hutkins R."/>
            <person name="O'Sullivan D."/>
            <person name="Steele J."/>
            <person name="Unlu G."/>
            <person name="Saier M.H. Jr."/>
            <person name="Klaenhammer T."/>
            <person name="Richardson P."/>
            <person name="Kozyavkin S."/>
            <person name="Weimer B.C."/>
            <person name="Mills D.A."/>
        </authorList>
    </citation>
    <scope>NUCLEOTIDE SEQUENCE [LARGE SCALE GENOMIC DNA]</scope>
    <source>
        <strain>ATCC 367 / BCRC 12310 / CIP 105137 / JCM 1170 / LMG 11437 / NCIMB 947 / NCTC 947</strain>
    </source>
</reference>
<gene>
    <name evidence="1" type="primary">murG</name>
    <name type="ordered locus">LVIS_1449</name>
</gene>
<sequence length="364" mass="39173">MRLMVSGGGTGGHIYPALALIKALKKREPNSAVMYVGSERGLESTIVPAKGIPFQATRIQGFKRSLSLENFKTVYLFLKSVHEAKKMIRQFKPDVVVGTGGYVSGAVVYAAARLHVPTLIHEQNSVVGITNRFLSRYVDRIAYVFDAALDQLPVNKMVKTGNPRAQEAAEVVSHFSWTEYGLQDDVPTLLIFGGSQGALKINAATVAAIPEFNHREYQVVFVTGQKRYDGVMAQLKGTTVADNVVIKPYIGNMPEVLPRVAAIVGRAGATSLAEITADGIPSILIPSPYVTADHQTKNANSLATVGAAEIIKEADLTGETLIAKADQLMTNDALRQDMATASKQLGVPDAADRVLDVVEALKRD</sequence>
<name>MURG_LEVBA</name>